<feature type="chain" id="PRO_1000024159" description="Dihydroorotate dehydrogenase (quinone)">
    <location>
        <begin position="1"/>
        <end position="345"/>
    </location>
</feature>
<feature type="active site" description="Nucleophile" evidence="1">
    <location>
        <position position="178"/>
    </location>
</feature>
<feature type="binding site" evidence="1">
    <location>
        <begin position="65"/>
        <end position="69"/>
    </location>
    <ligand>
        <name>FMN</name>
        <dbReference type="ChEBI" id="CHEBI:58210"/>
    </ligand>
</feature>
<feature type="binding site" evidence="1">
    <location>
        <position position="69"/>
    </location>
    <ligand>
        <name>substrate</name>
    </ligand>
</feature>
<feature type="binding site" evidence="1">
    <location>
        <position position="89"/>
    </location>
    <ligand>
        <name>FMN</name>
        <dbReference type="ChEBI" id="CHEBI:58210"/>
    </ligand>
</feature>
<feature type="binding site" evidence="1">
    <location>
        <begin position="114"/>
        <end position="118"/>
    </location>
    <ligand>
        <name>substrate</name>
    </ligand>
</feature>
<feature type="binding site" evidence="1">
    <location>
        <position position="142"/>
    </location>
    <ligand>
        <name>FMN</name>
        <dbReference type="ChEBI" id="CHEBI:58210"/>
    </ligand>
</feature>
<feature type="binding site" evidence="1">
    <location>
        <position position="175"/>
    </location>
    <ligand>
        <name>FMN</name>
        <dbReference type="ChEBI" id="CHEBI:58210"/>
    </ligand>
</feature>
<feature type="binding site" evidence="1">
    <location>
        <position position="175"/>
    </location>
    <ligand>
        <name>substrate</name>
    </ligand>
</feature>
<feature type="binding site" evidence="1">
    <location>
        <position position="180"/>
    </location>
    <ligand>
        <name>substrate</name>
    </ligand>
</feature>
<feature type="binding site" evidence="1">
    <location>
        <position position="220"/>
    </location>
    <ligand>
        <name>FMN</name>
        <dbReference type="ChEBI" id="CHEBI:58210"/>
    </ligand>
</feature>
<feature type="binding site" evidence="1">
    <location>
        <position position="248"/>
    </location>
    <ligand>
        <name>FMN</name>
        <dbReference type="ChEBI" id="CHEBI:58210"/>
    </ligand>
</feature>
<feature type="binding site" evidence="1">
    <location>
        <begin position="249"/>
        <end position="250"/>
    </location>
    <ligand>
        <name>substrate</name>
    </ligand>
</feature>
<feature type="binding site" evidence="1">
    <location>
        <position position="271"/>
    </location>
    <ligand>
        <name>FMN</name>
        <dbReference type="ChEBI" id="CHEBI:58210"/>
    </ligand>
</feature>
<feature type="binding site" evidence="1">
    <location>
        <position position="300"/>
    </location>
    <ligand>
        <name>FMN</name>
        <dbReference type="ChEBI" id="CHEBI:58210"/>
    </ligand>
</feature>
<feature type="binding site" evidence="1">
    <location>
        <begin position="321"/>
        <end position="322"/>
    </location>
    <ligand>
        <name>FMN</name>
        <dbReference type="ChEBI" id="CHEBI:58210"/>
    </ligand>
</feature>
<accession>A2S374</accession>
<proteinExistence type="inferred from homology"/>
<protein>
    <recommendedName>
        <fullName evidence="1">Dihydroorotate dehydrogenase (quinone)</fullName>
        <ecNumber evidence="1">1.3.5.2</ecNumber>
    </recommendedName>
    <alternativeName>
        <fullName evidence="1">DHOdehase</fullName>
        <shortName evidence="1">DHOD</shortName>
        <shortName evidence="1">DHODase</shortName>
    </alternativeName>
    <alternativeName>
        <fullName evidence="1">Dihydroorotate oxidase</fullName>
    </alternativeName>
</protein>
<sequence length="345" mass="36679">MFSSLYPLARASLFKMDAEDAHHLTLRMLGAAGRTGLACALSPRVPDAPRTVMGLSFRNPVGLAAGLDKDGAAIDGFAALGFGFIEVGTVTPRAQPGNPRPRMFRLPEADAIINRMGFNNSGVDQFVKNVQAARYRGVLGLNIGKNADTPIERAADDYLYCLERVYPFASYVTINISSPNTKNLRQLQGAGELDALLAALKDKQRRLADLHGKLVPLALKIAPDLDDEQVKEIAATLLRHDIEGVIATNTTLSREAVKGLPHADEAGGLSGRPVFDASNAVIRKLRAELGDAVPIIGVGGIFSGEDARAKLAAGAALVQLYTGFIYRGPALVAECVKAIARGEAR</sequence>
<evidence type="ECO:0000255" key="1">
    <source>
        <dbReference type="HAMAP-Rule" id="MF_00225"/>
    </source>
</evidence>
<reference key="1">
    <citation type="journal article" date="2010" name="Genome Biol. Evol.">
        <title>Continuing evolution of Burkholderia mallei through genome reduction and large-scale rearrangements.</title>
        <authorList>
            <person name="Losada L."/>
            <person name="Ronning C.M."/>
            <person name="DeShazer D."/>
            <person name="Woods D."/>
            <person name="Fedorova N."/>
            <person name="Kim H.S."/>
            <person name="Shabalina S.A."/>
            <person name="Pearson T.R."/>
            <person name="Brinkac L."/>
            <person name="Tan P."/>
            <person name="Nandi T."/>
            <person name="Crabtree J."/>
            <person name="Badger J."/>
            <person name="Beckstrom-Sternberg S."/>
            <person name="Saqib M."/>
            <person name="Schutzer S.E."/>
            <person name="Keim P."/>
            <person name="Nierman W.C."/>
        </authorList>
    </citation>
    <scope>NUCLEOTIDE SEQUENCE [LARGE SCALE GENOMIC DNA]</scope>
    <source>
        <strain>NCTC 10229</strain>
    </source>
</reference>
<gene>
    <name evidence="1" type="primary">pyrD</name>
    <name type="ordered locus">BMA10229_A0394</name>
</gene>
<dbReference type="EC" id="1.3.5.2" evidence="1"/>
<dbReference type="EMBL" id="CP000546">
    <property type="protein sequence ID" value="ABN01242.1"/>
    <property type="molecule type" value="Genomic_DNA"/>
</dbReference>
<dbReference type="RefSeq" id="WP_004193208.1">
    <property type="nucleotide sequence ID" value="NC_008836.1"/>
</dbReference>
<dbReference type="SMR" id="A2S374"/>
<dbReference type="KEGG" id="bml:BMA10229_A0394"/>
<dbReference type="HOGENOM" id="CLU_013640_2_0_4"/>
<dbReference type="UniPathway" id="UPA00070">
    <property type="reaction ID" value="UER00946"/>
</dbReference>
<dbReference type="Proteomes" id="UP000002283">
    <property type="component" value="Chromosome I"/>
</dbReference>
<dbReference type="GO" id="GO:0005737">
    <property type="term" value="C:cytoplasm"/>
    <property type="evidence" value="ECO:0007669"/>
    <property type="project" value="InterPro"/>
</dbReference>
<dbReference type="GO" id="GO:0005886">
    <property type="term" value="C:plasma membrane"/>
    <property type="evidence" value="ECO:0007669"/>
    <property type="project" value="UniProtKB-SubCell"/>
</dbReference>
<dbReference type="GO" id="GO:0106430">
    <property type="term" value="F:dihydroorotate dehydrogenase (quinone) activity"/>
    <property type="evidence" value="ECO:0007669"/>
    <property type="project" value="UniProtKB-EC"/>
</dbReference>
<dbReference type="GO" id="GO:0006207">
    <property type="term" value="P:'de novo' pyrimidine nucleobase biosynthetic process"/>
    <property type="evidence" value="ECO:0007669"/>
    <property type="project" value="InterPro"/>
</dbReference>
<dbReference type="GO" id="GO:0044205">
    <property type="term" value="P:'de novo' UMP biosynthetic process"/>
    <property type="evidence" value="ECO:0007669"/>
    <property type="project" value="UniProtKB-UniRule"/>
</dbReference>
<dbReference type="CDD" id="cd04738">
    <property type="entry name" value="DHOD_2_like"/>
    <property type="match status" value="1"/>
</dbReference>
<dbReference type="FunFam" id="3.20.20.70:FF:000028">
    <property type="entry name" value="Dihydroorotate dehydrogenase (quinone)"/>
    <property type="match status" value="1"/>
</dbReference>
<dbReference type="Gene3D" id="3.20.20.70">
    <property type="entry name" value="Aldolase class I"/>
    <property type="match status" value="1"/>
</dbReference>
<dbReference type="HAMAP" id="MF_00225">
    <property type="entry name" value="DHO_dh_type2"/>
    <property type="match status" value="1"/>
</dbReference>
<dbReference type="InterPro" id="IPR013785">
    <property type="entry name" value="Aldolase_TIM"/>
</dbReference>
<dbReference type="InterPro" id="IPR050074">
    <property type="entry name" value="DHO_dehydrogenase"/>
</dbReference>
<dbReference type="InterPro" id="IPR012135">
    <property type="entry name" value="Dihydroorotate_DH_1_2"/>
</dbReference>
<dbReference type="InterPro" id="IPR005719">
    <property type="entry name" value="Dihydroorotate_DH_2"/>
</dbReference>
<dbReference type="InterPro" id="IPR005720">
    <property type="entry name" value="Dihydroorotate_DH_cat"/>
</dbReference>
<dbReference type="InterPro" id="IPR001295">
    <property type="entry name" value="Dihydroorotate_DH_CS"/>
</dbReference>
<dbReference type="NCBIfam" id="NF003644">
    <property type="entry name" value="PRK05286.1-1"/>
    <property type="match status" value="1"/>
</dbReference>
<dbReference type="NCBIfam" id="NF003645">
    <property type="entry name" value="PRK05286.1-2"/>
    <property type="match status" value="1"/>
</dbReference>
<dbReference type="NCBIfam" id="NF003646">
    <property type="entry name" value="PRK05286.1-4"/>
    <property type="match status" value="1"/>
</dbReference>
<dbReference type="NCBIfam" id="NF003652">
    <property type="entry name" value="PRK05286.2-5"/>
    <property type="match status" value="1"/>
</dbReference>
<dbReference type="NCBIfam" id="TIGR01036">
    <property type="entry name" value="pyrD_sub2"/>
    <property type="match status" value="1"/>
</dbReference>
<dbReference type="PANTHER" id="PTHR48109:SF4">
    <property type="entry name" value="DIHYDROOROTATE DEHYDROGENASE (QUINONE), MITOCHONDRIAL"/>
    <property type="match status" value="1"/>
</dbReference>
<dbReference type="PANTHER" id="PTHR48109">
    <property type="entry name" value="DIHYDROOROTATE DEHYDROGENASE (QUINONE), MITOCHONDRIAL-RELATED"/>
    <property type="match status" value="1"/>
</dbReference>
<dbReference type="Pfam" id="PF01180">
    <property type="entry name" value="DHO_dh"/>
    <property type="match status" value="1"/>
</dbReference>
<dbReference type="PIRSF" id="PIRSF000164">
    <property type="entry name" value="DHO_oxidase"/>
    <property type="match status" value="1"/>
</dbReference>
<dbReference type="SUPFAM" id="SSF51395">
    <property type="entry name" value="FMN-linked oxidoreductases"/>
    <property type="match status" value="1"/>
</dbReference>
<dbReference type="PROSITE" id="PS00911">
    <property type="entry name" value="DHODEHASE_1"/>
    <property type="match status" value="1"/>
</dbReference>
<dbReference type="PROSITE" id="PS00912">
    <property type="entry name" value="DHODEHASE_2"/>
    <property type="match status" value="1"/>
</dbReference>
<name>PYRD_BURM9</name>
<organism>
    <name type="scientific">Burkholderia mallei (strain NCTC 10229)</name>
    <dbReference type="NCBI Taxonomy" id="412022"/>
    <lineage>
        <taxon>Bacteria</taxon>
        <taxon>Pseudomonadati</taxon>
        <taxon>Pseudomonadota</taxon>
        <taxon>Betaproteobacteria</taxon>
        <taxon>Burkholderiales</taxon>
        <taxon>Burkholderiaceae</taxon>
        <taxon>Burkholderia</taxon>
        <taxon>pseudomallei group</taxon>
    </lineage>
</organism>
<comment type="function">
    <text evidence="1">Catalyzes the conversion of dihydroorotate to orotate with quinone as electron acceptor.</text>
</comment>
<comment type="catalytic activity">
    <reaction evidence="1">
        <text>(S)-dihydroorotate + a quinone = orotate + a quinol</text>
        <dbReference type="Rhea" id="RHEA:30187"/>
        <dbReference type="ChEBI" id="CHEBI:24646"/>
        <dbReference type="ChEBI" id="CHEBI:30839"/>
        <dbReference type="ChEBI" id="CHEBI:30864"/>
        <dbReference type="ChEBI" id="CHEBI:132124"/>
        <dbReference type="EC" id="1.3.5.2"/>
    </reaction>
</comment>
<comment type="cofactor">
    <cofactor evidence="1">
        <name>FMN</name>
        <dbReference type="ChEBI" id="CHEBI:58210"/>
    </cofactor>
    <text evidence="1">Binds 1 FMN per subunit.</text>
</comment>
<comment type="pathway">
    <text evidence="1">Pyrimidine metabolism; UMP biosynthesis via de novo pathway; orotate from (S)-dihydroorotate (quinone route): step 1/1.</text>
</comment>
<comment type="subunit">
    <text evidence="1">Monomer.</text>
</comment>
<comment type="subcellular location">
    <subcellularLocation>
        <location evidence="1">Cell membrane</location>
        <topology evidence="1">Peripheral membrane protein</topology>
    </subcellularLocation>
</comment>
<comment type="similarity">
    <text evidence="1">Belongs to the dihydroorotate dehydrogenase family. Type 2 subfamily.</text>
</comment>
<keyword id="KW-1003">Cell membrane</keyword>
<keyword id="KW-0285">Flavoprotein</keyword>
<keyword id="KW-0288">FMN</keyword>
<keyword id="KW-0472">Membrane</keyword>
<keyword id="KW-0560">Oxidoreductase</keyword>
<keyword id="KW-0665">Pyrimidine biosynthesis</keyword>